<gene>
    <name evidence="4" type="primary">jhamt</name>
    <name evidence="4" type="ORF">CG17330</name>
</gene>
<evidence type="ECO:0000269" key="1">
    <source>
    </source>
</evidence>
<evidence type="ECO:0000303" key="2">
    <source>
    </source>
</evidence>
<evidence type="ECO:0000305" key="3"/>
<evidence type="ECO:0000312" key="4">
    <source>
        <dbReference type="FlyBase" id="FBgn0028841"/>
    </source>
</evidence>
<comment type="function">
    <text evidence="1">O-methyltransferase that transfers a methyl group from S-adenosyl-L-methionine (SAM) to the carboxyl group of juvenile hormone acids to produce active juvenile hormones in the corpora allata, the last step during juvenile hormone biosynthesis (PubMed:18549957). Also able to methylate farnesoate to methyl farnesoate (PubMed:18549957).</text>
</comment>
<comment type="catalytic activity">
    <reaction evidence="1">
        <text>(2E,6E)-farnesoate + S-adenosyl-L-methionine = methyl (2E,6E)-farnesoate + S-adenosyl-L-homocysteine</text>
        <dbReference type="Rhea" id="RHEA:43700"/>
        <dbReference type="ChEBI" id="CHEBI:57856"/>
        <dbReference type="ChEBI" id="CHEBI:59789"/>
        <dbReference type="ChEBI" id="CHEBI:80535"/>
        <dbReference type="ChEBI" id="CHEBI:83276"/>
        <dbReference type="EC" id="2.1.1.325"/>
    </reaction>
</comment>
<comment type="catalytic activity">
    <reaction evidence="1">
        <text>juvenile hormone III carboxylate + S-adenosyl-L-methionine = juvenile hormone III + S-adenosyl-L-homocysteine</text>
        <dbReference type="Rhea" id="RHEA:43720"/>
        <dbReference type="ChEBI" id="CHEBI:27493"/>
        <dbReference type="ChEBI" id="CHEBI:57856"/>
        <dbReference type="ChEBI" id="CHEBI:59789"/>
        <dbReference type="ChEBI" id="CHEBI:83274"/>
        <dbReference type="EC" id="2.1.1.325"/>
    </reaction>
</comment>
<comment type="biophysicochemical properties">
    <kinetics>
        <KM evidence="1">3.32 uM for juvenile hormone III acid</KM>
        <KM evidence="1">0.18 uM for farnesoate</KM>
        <text evidence="1">kcat is 7.7 min(-1) for juvenile hormone III acid. kcat is 10.1 min(-1) for farnesoate. kcat is 0.103 min(-1) for laureate acid. kcat is 0.041 min(-1) for palmitate acid.</text>
    </kinetics>
</comment>
<comment type="tissue specificity">
    <text evidence="1">Predominantly expressed in corpora allata. Also expressed at low level in testis.</text>
</comment>
<comment type="developmental stage">
    <text evidence="1">Highly expressed in the first instar larvae and then gradually decreases during larval development. Expression increases again in the wandering third larval stage. The lowest amount of expression is observed in the early and mid-pupal stages. After this, expression increases in the late pupal stage in both male and female adults.</text>
</comment>
<comment type="similarity">
    <text evidence="3">Belongs to the methyltransferase superfamily.</text>
</comment>
<comment type="sequence caution" evidence="3">
    <conflict type="erroneous initiation">
        <sequence resource="EMBL-CDS" id="AAL68063"/>
    </conflict>
    <text>Truncated N-terminus.</text>
</comment>
<reference key="1">
    <citation type="journal article" date="2008" name="Insect Biochem. Mol. Biol.">
        <title>Juvenile hormone acid O-methyltransferase in Drosophila melanogaster.</title>
        <authorList>
            <person name="Niwa R."/>
            <person name="Niimi T."/>
            <person name="Honda N."/>
            <person name="Yoshiyama M."/>
            <person name="Itoyama K."/>
            <person name="Kataoka H."/>
            <person name="Shinoda T."/>
        </authorList>
    </citation>
    <scope>NUCLEOTIDE SEQUENCE [MRNA]</scope>
    <scope>FUNCTION</scope>
    <scope>CATALYTIC ACTIVITY</scope>
    <scope>BIOPHYSICOCHEMICAL PROPERTIES</scope>
    <scope>TISSUE SPECIFICITY</scope>
    <scope>DEVELOPMENTAL STAGE</scope>
</reference>
<reference key="2">
    <citation type="journal article" date="2000" name="Science">
        <title>The genome sequence of Drosophila melanogaster.</title>
        <authorList>
            <person name="Adams M.D."/>
            <person name="Celniker S.E."/>
            <person name="Holt R.A."/>
            <person name="Evans C.A."/>
            <person name="Gocayne J.D."/>
            <person name="Amanatides P.G."/>
            <person name="Scherer S.E."/>
            <person name="Li P.W."/>
            <person name="Hoskins R.A."/>
            <person name="Galle R.F."/>
            <person name="George R.A."/>
            <person name="Lewis S.E."/>
            <person name="Richards S."/>
            <person name="Ashburner M."/>
            <person name="Henderson S.N."/>
            <person name="Sutton G.G."/>
            <person name="Wortman J.R."/>
            <person name="Yandell M.D."/>
            <person name="Zhang Q."/>
            <person name="Chen L.X."/>
            <person name="Brandon R.C."/>
            <person name="Rogers Y.-H.C."/>
            <person name="Blazej R.G."/>
            <person name="Champe M."/>
            <person name="Pfeiffer B.D."/>
            <person name="Wan K.H."/>
            <person name="Doyle C."/>
            <person name="Baxter E.G."/>
            <person name="Helt G."/>
            <person name="Nelson C.R."/>
            <person name="Miklos G.L.G."/>
            <person name="Abril J.F."/>
            <person name="Agbayani A."/>
            <person name="An H.-J."/>
            <person name="Andrews-Pfannkoch C."/>
            <person name="Baldwin D."/>
            <person name="Ballew R.M."/>
            <person name="Basu A."/>
            <person name="Baxendale J."/>
            <person name="Bayraktaroglu L."/>
            <person name="Beasley E.M."/>
            <person name="Beeson K.Y."/>
            <person name="Benos P.V."/>
            <person name="Berman B.P."/>
            <person name="Bhandari D."/>
            <person name="Bolshakov S."/>
            <person name="Borkova D."/>
            <person name="Botchan M.R."/>
            <person name="Bouck J."/>
            <person name="Brokstein P."/>
            <person name="Brottier P."/>
            <person name="Burtis K.C."/>
            <person name="Busam D.A."/>
            <person name="Butler H."/>
            <person name="Cadieu E."/>
            <person name="Center A."/>
            <person name="Chandra I."/>
            <person name="Cherry J.M."/>
            <person name="Cawley S."/>
            <person name="Dahlke C."/>
            <person name="Davenport L.B."/>
            <person name="Davies P."/>
            <person name="de Pablos B."/>
            <person name="Delcher A."/>
            <person name="Deng Z."/>
            <person name="Mays A.D."/>
            <person name="Dew I."/>
            <person name="Dietz S.M."/>
            <person name="Dodson K."/>
            <person name="Doup L.E."/>
            <person name="Downes M."/>
            <person name="Dugan-Rocha S."/>
            <person name="Dunkov B.C."/>
            <person name="Dunn P."/>
            <person name="Durbin K.J."/>
            <person name="Evangelista C.C."/>
            <person name="Ferraz C."/>
            <person name="Ferriera S."/>
            <person name="Fleischmann W."/>
            <person name="Fosler C."/>
            <person name="Gabrielian A.E."/>
            <person name="Garg N.S."/>
            <person name="Gelbart W.M."/>
            <person name="Glasser K."/>
            <person name="Glodek A."/>
            <person name="Gong F."/>
            <person name="Gorrell J.H."/>
            <person name="Gu Z."/>
            <person name="Guan P."/>
            <person name="Harris M."/>
            <person name="Harris N.L."/>
            <person name="Harvey D.A."/>
            <person name="Heiman T.J."/>
            <person name="Hernandez J.R."/>
            <person name="Houck J."/>
            <person name="Hostin D."/>
            <person name="Houston K.A."/>
            <person name="Howland T.J."/>
            <person name="Wei M.-H."/>
            <person name="Ibegwam C."/>
            <person name="Jalali M."/>
            <person name="Kalush F."/>
            <person name="Karpen G.H."/>
            <person name="Ke Z."/>
            <person name="Kennison J.A."/>
            <person name="Ketchum K.A."/>
            <person name="Kimmel B.E."/>
            <person name="Kodira C.D."/>
            <person name="Kraft C.L."/>
            <person name="Kravitz S."/>
            <person name="Kulp D."/>
            <person name="Lai Z."/>
            <person name="Lasko P."/>
            <person name="Lei Y."/>
            <person name="Levitsky A.A."/>
            <person name="Li J.H."/>
            <person name="Li Z."/>
            <person name="Liang Y."/>
            <person name="Lin X."/>
            <person name="Liu X."/>
            <person name="Mattei B."/>
            <person name="McIntosh T.C."/>
            <person name="McLeod M.P."/>
            <person name="McPherson D."/>
            <person name="Merkulov G."/>
            <person name="Milshina N.V."/>
            <person name="Mobarry C."/>
            <person name="Morris J."/>
            <person name="Moshrefi A."/>
            <person name="Mount S.M."/>
            <person name="Moy M."/>
            <person name="Murphy B."/>
            <person name="Murphy L."/>
            <person name="Muzny D.M."/>
            <person name="Nelson D.L."/>
            <person name="Nelson D.R."/>
            <person name="Nelson K.A."/>
            <person name="Nixon K."/>
            <person name="Nusskern D.R."/>
            <person name="Pacleb J.M."/>
            <person name="Palazzolo M."/>
            <person name="Pittman G.S."/>
            <person name="Pan S."/>
            <person name="Pollard J."/>
            <person name="Puri V."/>
            <person name="Reese M.G."/>
            <person name="Reinert K."/>
            <person name="Remington K."/>
            <person name="Saunders R.D.C."/>
            <person name="Scheeler F."/>
            <person name="Shen H."/>
            <person name="Shue B.C."/>
            <person name="Siden-Kiamos I."/>
            <person name="Simpson M."/>
            <person name="Skupski M.P."/>
            <person name="Smith T.J."/>
            <person name="Spier E."/>
            <person name="Spradling A.C."/>
            <person name="Stapleton M."/>
            <person name="Strong R."/>
            <person name="Sun E."/>
            <person name="Svirskas R."/>
            <person name="Tector C."/>
            <person name="Turner R."/>
            <person name="Venter E."/>
            <person name="Wang A.H."/>
            <person name="Wang X."/>
            <person name="Wang Z.-Y."/>
            <person name="Wassarman D.A."/>
            <person name="Weinstock G.M."/>
            <person name="Weissenbach J."/>
            <person name="Williams S.M."/>
            <person name="Woodage T."/>
            <person name="Worley K.C."/>
            <person name="Wu D."/>
            <person name="Yang S."/>
            <person name="Yao Q.A."/>
            <person name="Ye J."/>
            <person name="Yeh R.-F."/>
            <person name="Zaveri J.S."/>
            <person name="Zhan M."/>
            <person name="Zhang G."/>
            <person name="Zhao Q."/>
            <person name="Zheng L."/>
            <person name="Zheng X.H."/>
            <person name="Zhong F.N."/>
            <person name="Zhong W."/>
            <person name="Zhou X."/>
            <person name="Zhu S.C."/>
            <person name="Zhu X."/>
            <person name="Smith H.O."/>
            <person name="Gibbs R.A."/>
            <person name="Myers E.W."/>
            <person name="Rubin G.M."/>
            <person name="Venter J.C."/>
        </authorList>
    </citation>
    <scope>NUCLEOTIDE SEQUENCE [LARGE SCALE GENOMIC DNA]</scope>
    <source>
        <strain>Berkeley</strain>
    </source>
</reference>
<reference key="3">
    <citation type="journal article" date="2002" name="Genome Biol.">
        <title>Annotation of the Drosophila melanogaster euchromatic genome: a systematic review.</title>
        <authorList>
            <person name="Misra S."/>
            <person name="Crosby M.A."/>
            <person name="Mungall C.J."/>
            <person name="Matthews B.B."/>
            <person name="Campbell K.S."/>
            <person name="Hradecky P."/>
            <person name="Huang Y."/>
            <person name="Kaminker J.S."/>
            <person name="Millburn G.H."/>
            <person name="Prochnik S.E."/>
            <person name="Smith C.D."/>
            <person name="Tupy J.L."/>
            <person name="Whitfield E.J."/>
            <person name="Bayraktaroglu L."/>
            <person name="Berman B.P."/>
            <person name="Bettencourt B.R."/>
            <person name="Celniker S.E."/>
            <person name="de Grey A.D.N.J."/>
            <person name="Drysdale R.A."/>
            <person name="Harris N.L."/>
            <person name="Richter J."/>
            <person name="Russo S."/>
            <person name="Schroeder A.J."/>
            <person name="Shu S.Q."/>
            <person name="Stapleton M."/>
            <person name="Yamada C."/>
            <person name="Ashburner M."/>
            <person name="Gelbart W.M."/>
            <person name="Rubin G.M."/>
            <person name="Lewis S.E."/>
        </authorList>
    </citation>
    <scope>GENOME REANNOTATION</scope>
    <source>
        <strain>Berkeley</strain>
    </source>
</reference>
<reference key="4">
    <citation type="journal article" date="2002" name="Genome Biol.">
        <title>A Drosophila full-length cDNA resource.</title>
        <authorList>
            <person name="Stapleton M."/>
            <person name="Carlson J.W."/>
            <person name="Brokstein P."/>
            <person name="Yu C."/>
            <person name="Champe M."/>
            <person name="George R.A."/>
            <person name="Guarin H."/>
            <person name="Kronmiller B."/>
            <person name="Pacleb J.M."/>
            <person name="Park S."/>
            <person name="Wan K.H."/>
            <person name="Rubin G.M."/>
            <person name="Celniker S.E."/>
        </authorList>
    </citation>
    <scope>NUCLEOTIDE SEQUENCE [LARGE SCALE MRNA] OF 4-297</scope>
    <source>
        <strain>Berkeley</strain>
        <tissue>Testis</tissue>
    </source>
</reference>
<keyword id="KW-0489">Methyltransferase</keyword>
<keyword id="KW-1185">Reference proteome</keyword>
<keyword id="KW-0808">Transferase</keyword>
<organism>
    <name type="scientific">Drosophila melanogaster</name>
    <name type="common">Fruit fly</name>
    <dbReference type="NCBI Taxonomy" id="7227"/>
    <lineage>
        <taxon>Eukaryota</taxon>
        <taxon>Metazoa</taxon>
        <taxon>Ecdysozoa</taxon>
        <taxon>Arthropoda</taxon>
        <taxon>Hexapoda</taxon>
        <taxon>Insecta</taxon>
        <taxon>Pterygota</taxon>
        <taxon>Neoptera</taxon>
        <taxon>Endopterygota</taxon>
        <taxon>Diptera</taxon>
        <taxon>Brachycera</taxon>
        <taxon>Muscomorpha</taxon>
        <taxon>Ephydroidea</taxon>
        <taxon>Drosophilidae</taxon>
        <taxon>Drosophila</taxon>
        <taxon>Sophophora</taxon>
    </lineage>
</organism>
<name>JHAMT_DROME</name>
<sequence>MNQASLYQHANQVQRHDAKLILDEFASTMQWRSDGEDALLDVGSGSGNVLMDFVKPLLPIRGQLVGTDISSQMVHYASKHYQREERTRFQVLDIGCERLPEELSGRFDHVTSFYCLHWVQNLKGALGNIYNLLKPEGGDCLLAFLASNPVYEVYKILKTNDKWSTFMQDVENFISPLHYSLSPGEEFSQLLNDVGFVQHNVEIRNEVFVYEGVRTLKDNVKAICPFLERMPADLHEQFLDDFIDIVISMNLQQGENNEDQKFLSPYKLVVAYARKTPEFVNNVFLEPTHQNLVKGIN</sequence>
<dbReference type="EC" id="2.1.1.325" evidence="1"/>
<dbReference type="EMBL" id="AB113579">
    <property type="protein sequence ID" value="BAC98836.1"/>
    <property type="molecule type" value="mRNA"/>
</dbReference>
<dbReference type="EMBL" id="AE014134">
    <property type="protein sequence ID" value="AAF53533.2"/>
    <property type="molecule type" value="Genomic_DNA"/>
</dbReference>
<dbReference type="EMBL" id="AE014134">
    <property type="protein sequence ID" value="AHN54494.1"/>
    <property type="molecule type" value="Genomic_DNA"/>
</dbReference>
<dbReference type="EMBL" id="AY075194">
    <property type="protein sequence ID" value="AAL68063.1"/>
    <property type="status" value="ALT_INIT"/>
    <property type="molecule type" value="mRNA"/>
</dbReference>
<dbReference type="RefSeq" id="NP_001285980.1">
    <property type="nucleotide sequence ID" value="NM_001299051.1"/>
</dbReference>
<dbReference type="RefSeq" id="NP_609793.2">
    <property type="nucleotide sequence ID" value="NM_135949.3"/>
</dbReference>
<dbReference type="SMR" id="Q9VJK8"/>
<dbReference type="FunCoup" id="Q9VJK8">
    <property type="interactions" value="26"/>
</dbReference>
<dbReference type="STRING" id="7227.FBpp0309208"/>
<dbReference type="PaxDb" id="7227-FBpp0099678"/>
<dbReference type="EnsemblMetazoa" id="FBtr0080859">
    <property type="protein sequence ID" value="FBpp0099678"/>
    <property type="gene ID" value="FBgn0028841"/>
</dbReference>
<dbReference type="EnsemblMetazoa" id="FBtr0340233">
    <property type="protein sequence ID" value="FBpp0309208"/>
    <property type="gene ID" value="FBgn0028841"/>
</dbReference>
<dbReference type="GeneID" id="34977"/>
<dbReference type="KEGG" id="dme:Dmel_CG17330"/>
<dbReference type="UCSC" id="CG17330-RA">
    <property type="organism name" value="d. melanogaster"/>
</dbReference>
<dbReference type="AGR" id="FB:FBgn0028841"/>
<dbReference type="CTD" id="34977"/>
<dbReference type="FlyBase" id="FBgn0028841">
    <property type="gene designation" value="jhamt"/>
</dbReference>
<dbReference type="VEuPathDB" id="VectorBase:FBgn0028841"/>
<dbReference type="eggNOG" id="ENOG502S1MZ">
    <property type="taxonomic scope" value="Eukaryota"/>
</dbReference>
<dbReference type="HOGENOM" id="CLU_037990_5_0_1"/>
<dbReference type="InParanoid" id="Q9VJK8"/>
<dbReference type="OMA" id="IQHNVEI"/>
<dbReference type="OrthoDB" id="8300214at2759"/>
<dbReference type="PhylomeDB" id="Q9VJK8"/>
<dbReference type="BRENDA" id="2.1.1.325">
    <property type="organism ID" value="1994"/>
</dbReference>
<dbReference type="BioGRID-ORCS" id="34977">
    <property type="hits" value="0 hits in 1 CRISPR screen"/>
</dbReference>
<dbReference type="GenomeRNAi" id="34977"/>
<dbReference type="PRO" id="PR:Q9VJK8"/>
<dbReference type="Proteomes" id="UP000000803">
    <property type="component" value="Chromosome 2L"/>
</dbReference>
<dbReference type="Bgee" id="FBgn0028841">
    <property type="expression patterns" value="Expressed in epithelial cell in antenna and 18 other cell types or tissues"/>
</dbReference>
<dbReference type="GO" id="GO:0019010">
    <property type="term" value="F:farnesoic acid O-methyltransferase activity"/>
    <property type="evidence" value="ECO:0000314"/>
    <property type="project" value="FlyBase"/>
</dbReference>
<dbReference type="GO" id="GO:0008168">
    <property type="term" value="F:methyltransferase activity"/>
    <property type="evidence" value="ECO:0000318"/>
    <property type="project" value="GO_Central"/>
</dbReference>
<dbReference type="GO" id="GO:0006718">
    <property type="term" value="P:juvenile hormone biosynthetic process"/>
    <property type="evidence" value="ECO:0000314"/>
    <property type="project" value="FlyBase"/>
</dbReference>
<dbReference type="GO" id="GO:0008049">
    <property type="term" value="P:male courtship behavior"/>
    <property type="evidence" value="ECO:0000315"/>
    <property type="project" value="FlyBase"/>
</dbReference>
<dbReference type="GO" id="GO:0032259">
    <property type="term" value="P:methylation"/>
    <property type="evidence" value="ECO:0007669"/>
    <property type="project" value="UniProtKB-KW"/>
</dbReference>
<dbReference type="CDD" id="cd02440">
    <property type="entry name" value="AdoMet_MTases"/>
    <property type="match status" value="1"/>
</dbReference>
<dbReference type="FunFam" id="3.40.50.150:FF:000539">
    <property type="entry name" value="juvenile hormone acid O-methyltransferase"/>
    <property type="match status" value="1"/>
</dbReference>
<dbReference type="Gene3D" id="3.40.50.150">
    <property type="entry name" value="Vaccinia Virus protein VP39"/>
    <property type="match status" value="1"/>
</dbReference>
<dbReference type="InterPro" id="IPR013217">
    <property type="entry name" value="Methyltransf_12"/>
</dbReference>
<dbReference type="InterPro" id="IPR029063">
    <property type="entry name" value="SAM-dependent_MTases_sf"/>
</dbReference>
<dbReference type="PANTHER" id="PTHR43861:SF1">
    <property type="entry name" value="TRANS-ACONITATE 2-METHYLTRANSFERASE"/>
    <property type="match status" value="1"/>
</dbReference>
<dbReference type="PANTHER" id="PTHR43861">
    <property type="entry name" value="TRANS-ACONITATE 2-METHYLTRANSFERASE-RELATED"/>
    <property type="match status" value="1"/>
</dbReference>
<dbReference type="Pfam" id="PF08242">
    <property type="entry name" value="Methyltransf_12"/>
    <property type="match status" value="1"/>
</dbReference>
<dbReference type="SUPFAM" id="SSF53335">
    <property type="entry name" value="S-adenosyl-L-methionine-dependent methyltransferases"/>
    <property type="match status" value="1"/>
</dbReference>
<accession>Q9VJK8</accession>
<accession>Q767F0</accession>
<accession>Q8T900</accession>
<proteinExistence type="evidence at protein level"/>
<feature type="chain" id="PRO_0000433619" description="Juvenile hormone acid O-methyltransferase">
    <location>
        <begin position="1"/>
        <end position="297"/>
    </location>
</feature>
<feature type="sequence conflict" description="In Ref. 1; BAC98836 and 4; AAL68063." evidence="3" ref="1 4">
    <original>F</original>
    <variation>Y</variation>
    <location>
        <position position="166"/>
    </location>
</feature>
<feature type="sequence conflict" description="In Ref. 4; AAL68063." evidence="3" ref="4">
    <original>N</original>
    <variation>S</variation>
    <location>
        <position position="172"/>
    </location>
</feature>
<feature type="sequence conflict" description="In Ref. 1; BAC98836 and 4; AAL68063." evidence="3" ref="1 4">
    <original>S</original>
    <variation>N</variation>
    <location>
        <position position="182"/>
    </location>
</feature>
<protein>
    <recommendedName>
        <fullName evidence="2 3">Juvenile hormone acid O-methyltransferase</fullName>
        <ecNumber evidence="1">2.1.1.325</ecNumber>
    </recommendedName>
    <alternativeName>
        <fullName evidence="2">Juvenile hormone acid methyltransferase</fullName>
        <shortName evidence="2">DmJHAMT</shortName>
    </alternativeName>
</protein>